<keyword id="KW-0560">Oxidoreductase</keyword>
<keyword id="KW-1185">Reference proteome</keyword>
<name>EPHD_MYCTO</name>
<organism>
    <name type="scientific">Mycobacterium tuberculosis (strain CDC 1551 / Oshkosh)</name>
    <dbReference type="NCBI Taxonomy" id="83331"/>
    <lineage>
        <taxon>Bacteria</taxon>
        <taxon>Bacillati</taxon>
        <taxon>Actinomycetota</taxon>
        <taxon>Actinomycetes</taxon>
        <taxon>Mycobacteriales</taxon>
        <taxon>Mycobacteriaceae</taxon>
        <taxon>Mycobacterium</taxon>
        <taxon>Mycobacterium tuberculosis complex</taxon>
    </lineage>
</organism>
<proteinExistence type="inferred from homology"/>
<sequence>MPATQQMSRLVDSPDGVRIAVYHEGNPDGPTVVLVHGFPDSHVLWDGVVPLLAERFRIVRYDNRGVGRSSVPKPISAYTMAHFADDFDAVIGELSPGEPVHVLAHDWGSVGVWEYLRRPGASDRVASFTSVSGPSQDHLVNYVYGGLRRPWRPRTFLRAISQTLRLSYMALFSVPVVAPLLLRVALSSAAVRRNMVGDIPVDQIHHSETLARDAAHSVKTYPANYFRSFSSSRRGRAIPIVDVPVQLIVNSQDPYVRPYGYDQTARWVPRLWRRDIKAGHFSPMSHPQVMAAAVHDFADLADGKQPSRALLRAQVGRPRGYFGDTLVSVTGAGSGIGRETALAFAREGAEIVISDIDEATVKDTAAEIAARGGIAYPYVLDVSDAEAVEAFAERVSAEHGVPDIVVNNAGIGQAGRFLDTPAEQFDRVLAVNLGGVVNGCRAFGQRLVERGTGGHIVNVSSMAAYAPLQSLSAYCTSKAATYMFSDCLRAELDAAGVGLTTICPGVIDTNIVATTGFHAPGTDEEKIDGRRGQIDKMFALRSYGPDKVADAIVSAVKKKKPIRPVAPEAYALYGISRVLPQALRSTARLRVI</sequence>
<gene>
    <name type="primary">ephD</name>
    <name type="ordered locus">MT2270</name>
</gene>
<accession>P9WGS2</accession>
<accession>L0TBU4</accession>
<accession>P66777</accession>
<accession>Q10402</accession>
<reference key="1">
    <citation type="journal article" date="2002" name="J. Bacteriol.">
        <title>Whole-genome comparison of Mycobacterium tuberculosis clinical and laboratory strains.</title>
        <authorList>
            <person name="Fleischmann R.D."/>
            <person name="Alland D."/>
            <person name="Eisen J.A."/>
            <person name="Carpenter L."/>
            <person name="White O."/>
            <person name="Peterson J.D."/>
            <person name="DeBoy R.T."/>
            <person name="Dodson R.J."/>
            <person name="Gwinn M.L."/>
            <person name="Haft D.H."/>
            <person name="Hickey E.K."/>
            <person name="Kolonay J.F."/>
            <person name="Nelson W.C."/>
            <person name="Umayam L.A."/>
            <person name="Ermolaeva M.D."/>
            <person name="Salzberg S.L."/>
            <person name="Delcher A."/>
            <person name="Utterback T.R."/>
            <person name="Weidman J.F."/>
            <person name="Khouri H.M."/>
            <person name="Gill J."/>
            <person name="Mikula A."/>
            <person name="Bishai W."/>
            <person name="Jacobs W.R. Jr."/>
            <person name="Venter J.C."/>
            <person name="Fraser C.M."/>
        </authorList>
    </citation>
    <scope>NUCLEOTIDE SEQUENCE [LARGE SCALE GENOMIC DNA]</scope>
    <source>
        <strain>CDC 1551 / Oshkosh</strain>
    </source>
</reference>
<comment type="similarity">
    <text evidence="4">Belongs to the short-chain dehydrogenases/reductases (SDR) family.</text>
</comment>
<dbReference type="EC" id="1.-.-.-"/>
<dbReference type="EMBL" id="AE000516">
    <property type="protein sequence ID" value="AAK46556.1"/>
    <property type="molecule type" value="Genomic_DNA"/>
</dbReference>
<dbReference type="PIR" id="G70786">
    <property type="entry name" value="G70786"/>
</dbReference>
<dbReference type="RefSeq" id="WP_003411445.1">
    <property type="nucleotide sequence ID" value="NZ_KK341227.1"/>
</dbReference>
<dbReference type="SMR" id="P9WGS2"/>
<dbReference type="ESTHER" id="myctu-ephd">
    <property type="family name" value="Epoxide_hydrolase"/>
</dbReference>
<dbReference type="KEGG" id="mtc:MT2270"/>
<dbReference type="PATRIC" id="fig|83331.31.peg.2445"/>
<dbReference type="HOGENOM" id="CLU_511581_0_0_11"/>
<dbReference type="Proteomes" id="UP000001020">
    <property type="component" value="Chromosome"/>
</dbReference>
<dbReference type="GO" id="GO:0016491">
    <property type="term" value="F:oxidoreductase activity"/>
    <property type="evidence" value="ECO:0007669"/>
    <property type="project" value="UniProtKB-KW"/>
</dbReference>
<dbReference type="CDD" id="cd05233">
    <property type="entry name" value="SDR_c"/>
    <property type="match status" value="1"/>
</dbReference>
<dbReference type="FunFam" id="3.40.50.720:FF:000666">
    <property type="entry name" value="Probable oxidoreductase EphD"/>
    <property type="match status" value="1"/>
</dbReference>
<dbReference type="Gene3D" id="3.40.50.1820">
    <property type="entry name" value="alpha/beta hydrolase"/>
    <property type="match status" value="1"/>
</dbReference>
<dbReference type="Gene3D" id="3.40.50.720">
    <property type="entry name" value="NAD(P)-binding Rossmann-like Domain"/>
    <property type="match status" value="1"/>
</dbReference>
<dbReference type="InterPro" id="IPR000073">
    <property type="entry name" value="AB_hydrolase_1"/>
</dbReference>
<dbReference type="InterPro" id="IPR029058">
    <property type="entry name" value="AB_hydrolase_fold"/>
</dbReference>
<dbReference type="InterPro" id="IPR036291">
    <property type="entry name" value="NAD(P)-bd_dom_sf"/>
</dbReference>
<dbReference type="InterPro" id="IPR020904">
    <property type="entry name" value="Sc_DH/Rdtase_CS"/>
</dbReference>
<dbReference type="InterPro" id="IPR002347">
    <property type="entry name" value="SDR_fam"/>
</dbReference>
<dbReference type="NCBIfam" id="NF004514">
    <property type="entry name" value="PRK05855.1"/>
    <property type="match status" value="1"/>
</dbReference>
<dbReference type="PANTHER" id="PTHR43391:SF12">
    <property type="entry name" value="OXIDOREDUCTASE EPHD-RELATED"/>
    <property type="match status" value="1"/>
</dbReference>
<dbReference type="PANTHER" id="PTHR43391">
    <property type="entry name" value="RETINOL DEHYDROGENASE-RELATED"/>
    <property type="match status" value="1"/>
</dbReference>
<dbReference type="Pfam" id="PF00561">
    <property type="entry name" value="Abhydrolase_1"/>
    <property type="match status" value="1"/>
</dbReference>
<dbReference type="Pfam" id="PF00106">
    <property type="entry name" value="adh_short"/>
    <property type="match status" value="1"/>
</dbReference>
<dbReference type="PRINTS" id="PR00081">
    <property type="entry name" value="GDHRDH"/>
</dbReference>
<dbReference type="PRINTS" id="PR00080">
    <property type="entry name" value="SDRFAMILY"/>
</dbReference>
<dbReference type="SMART" id="SM00822">
    <property type="entry name" value="PKS_KR"/>
    <property type="match status" value="1"/>
</dbReference>
<dbReference type="SUPFAM" id="SSF53474">
    <property type="entry name" value="alpha/beta-Hydrolases"/>
    <property type="match status" value="1"/>
</dbReference>
<dbReference type="SUPFAM" id="SSF51735">
    <property type="entry name" value="NAD(P)-binding Rossmann-fold domains"/>
    <property type="match status" value="1"/>
</dbReference>
<dbReference type="PROSITE" id="PS00061">
    <property type="entry name" value="ADH_SHORT"/>
    <property type="match status" value="1"/>
</dbReference>
<protein>
    <recommendedName>
        <fullName>Probable oxidoreductase EphD</fullName>
        <ecNumber>1.-.-.-</ecNumber>
    </recommendedName>
</protein>
<feature type="chain" id="PRO_0000428312" description="Probable oxidoreductase EphD">
    <location>
        <begin position="1"/>
        <end position="592"/>
    </location>
</feature>
<feature type="domain" description="AB hydrolase-1" evidence="2">
    <location>
        <begin position="30"/>
        <end position="286"/>
    </location>
</feature>
<feature type="active site" description="Proton acceptor" evidence="3">
    <location>
        <position position="474"/>
    </location>
</feature>
<feature type="binding site" evidence="1">
    <location>
        <position position="461"/>
    </location>
    <ligand>
        <name>substrate</name>
    </ligand>
</feature>
<evidence type="ECO:0000250" key="1"/>
<evidence type="ECO:0000255" key="2"/>
<evidence type="ECO:0000255" key="3">
    <source>
        <dbReference type="PROSITE-ProRule" id="PRU10001"/>
    </source>
</evidence>
<evidence type="ECO:0000305" key="4"/>